<accession>A6UWV0</accession>
<reference key="1">
    <citation type="submission" date="2007-06" db="EMBL/GenBank/DDBJ databases">
        <title>Complete sequence of Methanococcus aeolicus Nankai-3.</title>
        <authorList>
            <consortium name="US DOE Joint Genome Institute"/>
            <person name="Copeland A."/>
            <person name="Lucas S."/>
            <person name="Lapidus A."/>
            <person name="Barry K."/>
            <person name="Glavina del Rio T."/>
            <person name="Dalin E."/>
            <person name="Tice H."/>
            <person name="Pitluck S."/>
            <person name="Chain P."/>
            <person name="Malfatti S."/>
            <person name="Shin M."/>
            <person name="Vergez L."/>
            <person name="Schmutz J."/>
            <person name="Larimer F."/>
            <person name="Land M."/>
            <person name="Hauser L."/>
            <person name="Kyrpides N."/>
            <person name="Lykidis A."/>
            <person name="Sieprawska-Lupa M."/>
            <person name="Whitman W.B."/>
            <person name="Richardson P."/>
        </authorList>
    </citation>
    <scope>NUCLEOTIDE SEQUENCE [LARGE SCALE GENOMIC DNA]</scope>
    <source>
        <strain>ATCC BAA-1280 / DSM 17508 / OCM 812 / Nankai-3</strain>
    </source>
</reference>
<protein>
    <recommendedName>
        <fullName evidence="1">Small ribosomal subunit protein eS4</fullName>
    </recommendedName>
    <alternativeName>
        <fullName evidence="3">30S ribosomal protein S4e</fullName>
    </alternativeName>
</protein>
<dbReference type="EMBL" id="CP000743">
    <property type="protein sequence ID" value="ABR56972.1"/>
    <property type="molecule type" value="Genomic_DNA"/>
</dbReference>
<dbReference type="RefSeq" id="WP_011974104.1">
    <property type="nucleotide sequence ID" value="NC_009635.1"/>
</dbReference>
<dbReference type="SMR" id="A6UWV0"/>
<dbReference type="STRING" id="419665.Maeo_1396"/>
<dbReference type="GeneID" id="5327232"/>
<dbReference type="KEGG" id="mae:Maeo_1396"/>
<dbReference type="eggNOG" id="arCOG04093">
    <property type="taxonomic scope" value="Archaea"/>
</dbReference>
<dbReference type="HOGENOM" id="CLU_060400_0_0_2"/>
<dbReference type="OrthoDB" id="372073at2157"/>
<dbReference type="Proteomes" id="UP000001106">
    <property type="component" value="Chromosome"/>
</dbReference>
<dbReference type="GO" id="GO:0022627">
    <property type="term" value="C:cytosolic small ribosomal subunit"/>
    <property type="evidence" value="ECO:0007669"/>
    <property type="project" value="TreeGrafter"/>
</dbReference>
<dbReference type="GO" id="GO:0019843">
    <property type="term" value="F:rRNA binding"/>
    <property type="evidence" value="ECO:0007669"/>
    <property type="project" value="UniProtKB-KW"/>
</dbReference>
<dbReference type="GO" id="GO:0003735">
    <property type="term" value="F:structural constituent of ribosome"/>
    <property type="evidence" value="ECO:0007669"/>
    <property type="project" value="InterPro"/>
</dbReference>
<dbReference type="GO" id="GO:0006412">
    <property type="term" value="P:translation"/>
    <property type="evidence" value="ECO:0007669"/>
    <property type="project" value="UniProtKB-UniRule"/>
</dbReference>
<dbReference type="CDD" id="cd06087">
    <property type="entry name" value="KOW_RPS4"/>
    <property type="match status" value="1"/>
</dbReference>
<dbReference type="CDD" id="cd00165">
    <property type="entry name" value="S4"/>
    <property type="match status" value="1"/>
</dbReference>
<dbReference type="FunFam" id="3.10.290.10:FF:000002">
    <property type="entry name" value="40S ribosomal protein S4"/>
    <property type="match status" value="1"/>
</dbReference>
<dbReference type="Gene3D" id="2.30.30.30">
    <property type="match status" value="1"/>
</dbReference>
<dbReference type="Gene3D" id="2.40.50.740">
    <property type="match status" value="1"/>
</dbReference>
<dbReference type="Gene3D" id="3.10.290.10">
    <property type="entry name" value="RNA-binding S4 domain"/>
    <property type="match status" value="1"/>
</dbReference>
<dbReference type="HAMAP" id="MF_00485">
    <property type="entry name" value="Ribosomal_eS4"/>
    <property type="match status" value="1"/>
</dbReference>
<dbReference type="InterPro" id="IPR014722">
    <property type="entry name" value="Rib_uL2_dom2"/>
</dbReference>
<dbReference type="InterPro" id="IPR000876">
    <property type="entry name" value="Ribosomal_eS4"/>
</dbReference>
<dbReference type="InterPro" id="IPR013845">
    <property type="entry name" value="Ribosomal_eS4_central_region"/>
</dbReference>
<dbReference type="InterPro" id="IPR038237">
    <property type="entry name" value="Ribosomal_eS4_central_sf"/>
</dbReference>
<dbReference type="InterPro" id="IPR041982">
    <property type="entry name" value="Ribosomal_eS4_KOW"/>
</dbReference>
<dbReference type="InterPro" id="IPR013843">
    <property type="entry name" value="Ribosomal_eS4_N"/>
</dbReference>
<dbReference type="InterPro" id="IPR002942">
    <property type="entry name" value="S4_RNA-bd"/>
</dbReference>
<dbReference type="InterPro" id="IPR036986">
    <property type="entry name" value="S4_RNA-bd_sf"/>
</dbReference>
<dbReference type="NCBIfam" id="NF003312">
    <property type="entry name" value="PRK04313.1"/>
    <property type="match status" value="1"/>
</dbReference>
<dbReference type="PANTHER" id="PTHR11581">
    <property type="entry name" value="30S/40S RIBOSOMAL PROTEIN S4"/>
    <property type="match status" value="1"/>
</dbReference>
<dbReference type="PANTHER" id="PTHR11581:SF0">
    <property type="entry name" value="SMALL RIBOSOMAL SUBUNIT PROTEIN ES4"/>
    <property type="match status" value="1"/>
</dbReference>
<dbReference type="Pfam" id="PF00900">
    <property type="entry name" value="Ribosomal_S4e"/>
    <property type="match status" value="1"/>
</dbReference>
<dbReference type="Pfam" id="PF08071">
    <property type="entry name" value="RS4NT"/>
    <property type="match status" value="1"/>
</dbReference>
<dbReference type="Pfam" id="PF01479">
    <property type="entry name" value="S4"/>
    <property type="match status" value="1"/>
</dbReference>
<dbReference type="PIRSF" id="PIRSF002116">
    <property type="entry name" value="Ribosomal_S4"/>
    <property type="match status" value="1"/>
</dbReference>
<dbReference type="SUPFAM" id="SSF55174">
    <property type="entry name" value="Alpha-L RNA-binding motif"/>
    <property type="match status" value="1"/>
</dbReference>
<dbReference type="PROSITE" id="PS50889">
    <property type="entry name" value="S4"/>
    <property type="match status" value="1"/>
</dbReference>
<organism>
    <name type="scientific">Methanococcus aeolicus (strain ATCC BAA-1280 / DSM 17508 / OCM 812 / Nankai-3)</name>
    <dbReference type="NCBI Taxonomy" id="419665"/>
    <lineage>
        <taxon>Archaea</taxon>
        <taxon>Methanobacteriati</taxon>
        <taxon>Methanobacteriota</taxon>
        <taxon>Methanomada group</taxon>
        <taxon>Methanococci</taxon>
        <taxon>Methanococcales</taxon>
        <taxon>Methanococcaceae</taxon>
        <taxon>Methanococcus</taxon>
    </lineage>
</organism>
<keyword id="KW-0687">Ribonucleoprotein</keyword>
<keyword id="KW-0689">Ribosomal protein</keyword>
<keyword id="KW-0694">RNA-binding</keyword>
<keyword id="KW-0699">rRNA-binding</keyword>
<sequence>MANKGPRKHLKRLPAPKNWQISRKTNKYTTRPSAGPHAMGSSLPLLLVLRDLLGYADNAREAKKVIKMGKVLVDGVKRKDHRYPTGLMDVISLPDANESFLVVLDEKGRIKLNKIKDNTKKLCKIENKTVIKGGHIQLNLHDGRNQIVKLADATKAEEDIYKTGDCVILSIPEQSIVGHVQFGEGKLAYITGGKHVGDFAKIIGIEKKQLYPDIITLETENGEQFKTIRDYVFIVGDDKPVISM</sequence>
<name>RS4E_META3</name>
<comment type="similarity">
    <text evidence="1">Belongs to the eukaryotic ribosomal protein eS4 family.</text>
</comment>
<gene>
    <name evidence="1" type="primary">rps4e</name>
    <name type="ordered locus">Maeo_1396</name>
</gene>
<evidence type="ECO:0000255" key="1">
    <source>
        <dbReference type="HAMAP-Rule" id="MF_00485"/>
    </source>
</evidence>
<evidence type="ECO:0000256" key="2">
    <source>
        <dbReference type="SAM" id="MobiDB-lite"/>
    </source>
</evidence>
<evidence type="ECO:0000305" key="3"/>
<proteinExistence type="inferred from homology"/>
<feature type="chain" id="PRO_1000081336" description="Small ribosomal subunit protein eS4">
    <location>
        <begin position="1"/>
        <end position="244"/>
    </location>
</feature>
<feature type="domain" description="S4 RNA-binding" evidence="1">
    <location>
        <begin position="43"/>
        <end position="106"/>
    </location>
</feature>
<feature type="region of interest" description="Disordered" evidence="2">
    <location>
        <begin position="1"/>
        <end position="36"/>
    </location>
</feature>
<feature type="compositionally biased region" description="Basic residues" evidence="2">
    <location>
        <begin position="1"/>
        <end position="14"/>
    </location>
</feature>
<feature type="compositionally biased region" description="Polar residues" evidence="2">
    <location>
        <begin position="19"/>
        <end position="32"/>
    </location>
</feature>